<gene>
    <name type="primary">LCK</name>
</gene>
<name>LCK_AOTNA</name>
<keyword id="KW-0067">ATP-binding</keyword>
<keyword id="KW-1003">Cell membrane</keyword>
<keyword id="KW-0963">Cytoplasm</keyword>
<keyword id="KW-1017">Isopeptide bond</keyword>
<keyword id="KW-0418">Kinase</keyword>
<keyword id="KW-0449">Lipoprotein</keyword>
<keyword id="KW-0472">Membrane</keyword>
<keyword id="KW-0519">Myristate</keyword>
<keyword id="KW-0547">Nucleotide-binding</keyword>
<keyword id="KW-0564">Palmitate</keyword>
<keyword id="KW-0597">Phosphoprotein</keyword>
<keyword id="KW-0656">Proto-oncogene</keyword>
<keyword id="KW-1185">Reference proteome</keyword>
<keyword id="KW-0727">SH2 domain</keyword>
<keyword id="KW-0728">SH3 domain</keyword>
<keyword id="KW-0808">Transferase</keyword>
<keyword id="KW-0829">Tyrosine-protein kinase</keyword>
<keyword id="KW-0832">Ubl conjugation</keyword>
<proteinExistence type="evidence at transcript level"/>
<protein>
    <recommendedName>
        <fullName>Tyrosine-protein kinase Lck</fullName>
        <ecNumber>2.7.10.2</ecNumber>
    </recommendedName>
    <alternativeName>
        <fullName>Lymphocyte cell-specific protein-tyrosine kinase</fullName>
    </alternativeName>
    <alternativeName>
        <fullName>Proto-oncogene Lck</fullName>
    </alternativeName>
    <alternativeName>
        <fullName>p56-LCK</fullName>
    </alternativeName>
</protein>
<sequence>MGCGCSSHPEDDWMENIDVCENCHYPIVPLDGKATLLFRNGSEVRDPLVRYEGSNPPASPLQDNLVIALHSYKPSHDGDLGFEKGEQLRILEQNGEWWKAQSLTTGQEGFIPFNFVAKANSLEPEPWFFKNLSRKDAERQLLAPGNTHGSFLIRESESTAGSFSLSVRDFDQNQGEVVKHYKIRNLDNGGFYISPRITFPGLHELVRHYTNASDGLCTRLSRPCQTQKPQKPWWEDEWEVPRETLKLVERLGAGQFGEVWMGYYNDHTKVAVKSLKQGSMSPDAFLAEANLMKQLQHQRLVRLYAVVTQEPIYIITEYMENGSLVDFLKTPSGIKLTINKLLDMAAQIAEGMAFIEERNYIHRDLRAANILVSDTLSCKIADFGLARLIEDNEYTAREGAKFPIKWTAPEAINYGTFTIKSDVWSFGILLTEIVTHGRIPYPGMTNPEVIQNLERGYRMVRPDNCPEELYHLMMLCWKERPEDRPTFDYLRSVLEDFFTATEGQYQPQP</sequence>
<accession>Q5PXS1</accession>
<reference key="1">
    <citation type="submission" date="2005-02" db="EMBL/GenBank/DDBJ databases">
        <authorList>
            <person name="Perez-Quintero L.A."/>
            <person name="Vernot J.P."/>
        </authorList>
    </citation>
    <scope>NUCLEOTIDE SEQUENCE [MRNA]</scope>
</reference>
<comment type="function">
    <text evidence="1">Non-receptor tyrosine-protein kinase that plays an essential role in the selection and maturation of developing T-cells in the thymus and in the function of mature T-cells. Plays a key role in T-cell antigen receptor (TCR)-linked signal transduction pathways. Constitutively associated with the cytoplasmic portions of the CD4 and CD8 surface receptors. Association of the TCR with a peptide antigen-bound MHC complex facilitates the interaction of CD4 and CD8 with MHC class II and class I molecules, respectively, thereby recruiting the associated LCK protein to the vicinity of the TCR/CD3 complex. LCK then phosphorylates tyrosine residues within the immunoreceptor tyrosine-based activation motifs (ITAM) of the cytoplasmic tails of the TCR-gamma chains and CD3 subunits, initiating the TCR/CD3 signaling pathway. Once stimulated, the TCR recruits the tyrosine kinase ZAP70, that becomes phosphorylated and activated by LCK. Following this, a large number of signaling molecules are recruited, ultimately leading to lymphokine production. LCK also contributes to signaling by other receptor molecules. Associates directly with the cytoplasmic tail of CD2, which leads to hyperphosphorylation and activation of LCK. Also plays a role in the IL2 receptor-linked signaling pathway that controls the T-cell proliferative response. Binding of IL2 to its receptor results in increased activity of LCK. Is expressed at all stages of thymocyte development and is required for the regulation of maturation events that are governed by both pre-TCR and mature alpha beta TCR. Phosphorylates other substrates including RUNX3, PTK2B/PYK2, the microtubule-associated protein MAPT, RHOH or TYROBP (By similarity). Interacts with UNC119; this interaction plays a crucial role in activation of LCK (By similarity).</text>
</comment>
<comment type="catalytic activity">
    <reaction evidence="7">
        <text>L-tyrosyl-[protein] + ATP = O-phospho-L-tyrosyl-[protein] + ADP + H(+)</text>
        <dbReference type="Rhea" id="RHEA:10596"/>
        <dbReference type="Rhea" id="RHEA-COMP:10136"/>
        <dbReference type="Rhea" id="RHEA-COMP:20101"/>
        <dbReference type="ChEBI" id="CHEBI:15378"/>
        <dbReference type="ChEBI" id="CHEBI:30616"/>
        <dbReference type="ChEBI" id="CHEBI:46858"/>
        <dbReference type="ChEBI" id="CHEBI:61978"/>
        <dbReference type="ChEBI" id="CHEBI:456216"/>
        <dbReference type="EC" id="2.7.10.2"/>
    </reaction>
</comment>
<comment type="activity regulation">
    <text evidence="1">The relative activities of the inhibitory tyrosine-protein kinase CSK and the activating tyrosine-protein phosphatase PTPRC/CD45 determine the level of LCK activity. These interactions allow rapid and efficient activation of LCK in response to TCR stimulation (By similarity).</text>
</comment>
<comment type="subunit">
    <text evidence="2">Binds to the cytoplasmic domain of cell surface receptors, such as AXL, CD2, CD4, CD5, CD8, CD44, CD45 and CD122. Also binds to effector molecules, such as PI4K, VAV1, RASA1, FYB1 and to other protein kinases including CDK1, RAF1, ZAP70 and SYK. Binds to phosphatidylinositol 3'-kinase (PI3K) from T-lymphocytes through its SH3 domain and to the tyrosine phosphorylated form of KHDRBS1/p70 through its SH2 domain. Interacts with SQSTM1. Interacts with phosphorylated LIME1. LIME1. Interacts with CBLB and PTPRH. Interacts with RUNX3. Forms a signaling complex with EPHA1, PTK2B and PI3-KINASE; upon activation by EFNA1 which may regulate T-lymphocytes migration. Associates with ZAP70 and RHOH; these interactions allow LCK-mediated RHOH and CD3 subunit phosphorylation in the presence of functional ZAP70. Interacts with CEACAM1 (via cytoplasmic domain); mediates CEACAM1 phosphorylation resulting in PTPN6 recruitment that dephosphorylates TCR stimulation-induced CD247 and ZAP70. Interacts with CD160. Interacts with CD48.</text>
</comment>
<comment type="subcellular location">
    <subcellularLocation>
        <location evidence="2">Cell membrane</location>
        <topology evidence="2">Lipid-anchor</topology>
        <orientation evidence="2">Cytoplasmic side</orientation>
    </subcellularLocation>
    <subcellularLocation>
        <location evidence="2">Cytoplasm</location>
        <location evidence="2">Cytosol</location>
    </subcellularLocation>
    <text evidence="2">Present in lipid rafts in an inactive form.</text>
</comment>
<comment type="domain">
    <text evidence="1">The SH2 domain mediates interaction with SQSTM1. Interaction is regulated by Ser-59 phosphorylation (By similarity).</text>
</comment>
<comment type="PTM">
    <text evidence="1 2">Autophosphorylated on Tyr-394, increasing enzymatic activity, this site is dephosphorylated by PTN22. Phosphorylated on Tyr-505 by CSK, decreasing activity. Dephosphorylated by PTPRC/CD45. Dephosphorylation at Tyr-394 by PTPN2 negatively regulates T-cells differentiation (By similarity). Dephosphorylation at Tyr-394 by DUSP22 negatively regulates T-cell receptor signaling (By similarity).</text>
</comment>
<comment type="PTM">
    <text evidence="1">Myristoylation is required prior to palmitoylation.</text>
</comment>
<comment type="PTM">
    <text evidence="2">Palmitoylation regulates association with the plasma membrane and could be mediated by ZDHHC2.</text>
</comment>
<comment type="PTM">
    <text evidence="2">'Lys-63'-linked ubiquitinated at Lys-99 and Lys-276 by UBR2; this modification is required for autophosphorylation at Tyr-394.</text>
</comment>
<comment type="similarity">
    <text evidence="4">Belongs to the protein kinase superfamily. Tyr protein kinase family. SRC subfamily.</text>
</comment>
<evidence type="ECO:0000250" key="1"/>
<evidence type="ECO:0000250" key="2">
    <source>
        <dbReference type="UniProtKB" id="P06239"/>
    </source>
</evidence>
<evidence type="ECO:0000250" key="3">
    <source>
        <dbReference type="UniProtKB" id="P06240"/>
    </source>
</evidence>
<evidence type="ECO:0000255" key="4">
    <source>
        <dbReference type="PROSITE-ProRule" id="PRU00159"/>
    </source>
</evidence>
<evidence type="ECO:0000255" key="5">
    <source>
        <dbReference type="PROSITE-ProRule" id="PRU00191"/>
    </source>
</evidence>
<evidence type="ECO:0000255" key="6">
    <source>
        <dbReference type="PROSITE-ProRule" id="PRU00192"/>
    </source>
</evidence>
<evidence type="ECO:0000255" key="7">
    <source>
        <dbReference type="PROSITE-ProRule" id="PRU10028"/>
    </source>
</evidence>
<feature type="initiator methionine" description="Removed">
    <location>
        <position position="1"/>
    </location>
</feature>
<feature type="chain" id="PRO_0000088123" description="Tyrosine-protein kinase Lck">
    <location>
        <begin position="2"/>
        <end position="509"/>
    </location>
</feature>
<feature type="domain" description="SH3" evidence="6">
    <location>
        <begin position="61"/>
        <end position="121"/>
    </location>
</feature>
<feature type="domain" description="SH2" evidence="5">
    <location>
        <begin position="127"/>
        <end position="224"/>
    </location>
</feature>
<feature type="domain" description="Protein kinase" evidence="4">
    <location>
        <begin position="245"/>
        <end position="498"/>
    </location>
</feature>
<feature type="region of interest" description="Interactions with CD4 and CD8" evidence="1">
    <location>
        <begin position="2"/>
        <end position="72"/>
    </location>
</feature>
<feature type="region of interest" description="Interaction with PTPRH" evidence="1">
    <location>
        <begin position="154"/>
        <end position="242"/>
    </location>
</feature>
<feature type="active site" description="Proton acceptor" evidence="4 7">
    <location>
        <position position="364"/>
    </location>
</feature>
<feature type="binding site" evidence="4">
    <location>
        <begin position="251"/>
        <end position="259"/>
    </location>
    <ligand>
        <name>ATP</name>
        <dbReference type="ChEBI" id="CHEBI:30616"/>
    </ligand>
</feature>
<feature type="binding site" evidence="4">
    <location>
        <position position="273"/>
    </location>
    <ligand>
        <name>ATP</name>
        <dbReference type="ChEBI" id="CHEBI:30616"/>
    </ligand>
</feature>
<feature type="modified residue" description="Phosphoserine" evidence="2">
    <location>
        <position position="102"/>
    </location>
</feature>
<feature type="modified residue" description="Phosphothreonine" evidence="2">
    <location>
        <position position="159"/>
    </location>
</feature>
<feature type="modified residue" description="Phosphoserine" evidence="2">
    <location>
        <position position="162"/>
    </location>
</feature>
<feature type="modified residue" description="Phosphotyrosine" evidence="3">
    <location>
        <position position="192"/>
    </location>
</feature>
<feature type="modified residue" description="Phosphoserine" evidence="2">
    <location>
        <position position="194"/>
    </location>
</feature>
<feature type="modified residue" description="Phosphotyrosine; by autocatalysis" evidence="2">
    <location>
        <position position="394"/>
    </location>
</feature>
<feature type="modified residue" description="Phosphotyrosine; by CSK" evidence="2">
    <location>
        <position position="505"/>
    </location>
</feature>
<feature type="lipid moiety-binding region" description="N-myristoyl glycine" evidence="1">
    <location>
        <position position="2"/>
    </location>
</feature>
<feature type="lipid moiety-binding region" description="S-palmitoyl cysteine" evidence="1">
    <location>
        <position position="3"/>
    </location>
</feature>
<feature type="lipid moiety-binding region" description="S-palmitoyl cysteine" evidence="1">
    <location>
        <position position="5"/>
    </location>
</feature>
<feature type="cross-link" description="Glycyl lysine isopeptide (Lys-Gly) (interchain with G-Cter in ubiquitin)" evidence="2">
    <location>
        <position position="99"/>
    </location>
</feature>
<feature type="cross-link" description="Glycyl lysine isopeptide (Lys-Gly) (interchain with G-Cter in ubiquitin)" evidence="2">
    <location>
        <position position="276"/>
    </location>
</feature>
<dbReference type="EC" id="2.7.10.2"/>
<dbReference type="EMBL" id="AY821852">
    <property type="protein sequence ID" value="AAV70114.2"/>
    <property type="molecule type" value="mRNA"/>
</dbReference>
<dbReference type="RefSeq" id="XP_012296377.1">
    <property type="nucleotide sequence ID" value="XM_012440954.2"/>
</dbReference>
<dbReference type="RefSeq" id="XP_012296383.1">
    <property type="nucleotide sequence ID" value="XM_012440960.2"/>
</dbReference>
<dbReference type="BMRB" id="Q5PXS1"/>
<dbReference type="SMR" id="Q5PXS1"/>
<dbReference type="STRING" id="37293.ENSANAP00000034512"/>
<dbReference type="Ensembl" id="ENSANAT00000052605.1">
    <property type="protein sequence ID" value="ENSANAP00000034541.1"/>
    <property type="gene ID" value="ENSANAG00000034805.1"/>
</dbReference>
<dbReference type="GeneID" id="105709116"/>
<dbReference type="KEGG" id="anan:105709116"/>
<dbReference type="CTD" id="3932"/>
<dbReference type="GeneTree" id="ENSGT00940000161163"/>
<dbReference type="OMA" id="CSPMQDK"/>
<dbReference type="OrthoDB" id="4062651at2759"/>
<dbReference type="Proteomes" id="UP000233020">
    <property type="component" value="Unplaced"/>
</dbReference>
<dbReference type="GO" id="GO:0005829">
    <property type="term" value="C:cytosol"/>
    <property type="evidence" value="ECO:0007669"/>
    <property type="project" value="UniProtKB-SubCell"/>
</dbReference>
<dbReference type="GO" id="GO:0045121">
    <property type="term" value="C:membrane raft"/>
    <property type="evidence" value="ECO:0000250"/>
    <property type="project" value="UniProtKB"/>
</dbReference>
<dbReference type="GO" id="GO:0000242">
    <property type="term" value="C:pericentriolar material"/>
    <property type="evidence" value="ECO:0000250"/>
    <property type="project" value="UniProtKB"/>
</dbReference>
<dbReference type="GO" id="GO:0005886">
    <property type="term" value="C:plasma membrane"/>
    <property type="evidence" value="ECO:0007669"/>
    <property type="project" value="UniProtKB-SubCell"/>
</dbReference>
<dbReference type="GO" id="GO:0005524">
    <property type="term" value="F:ATP binding"/>
    <property type="evidence" value="ECO:0007669"/>
    <property type="project" value="UniProtKB-KW"/>
</dbReference>
<dbReference type="GO" id="GO:0004715">
    <property type="term" value="F:non-membrane spanning protein tyrosine kinase activity"/>
    <property type="evidence" value="ECO:0007669"/>
    <property type="project" value="UniProtKB-EC"/>
</dbReference>
<dbReference type="GO" id="GO:0004722">
    <property type="term" value="F:protein serine/threonine phosphatase activity"/>
    <property type="evidence" value="ECO:0000250"/>
    <property type="project" value="UniProtKB"/>
</dbReference>
<dbReference type="GO" id="GO:0004713">
    <property type="term" value="F:protein tyrosine kinase activity"/>
    <property type="evidence" value="ECO:0000250"/>
    <property type="project" value="UniProtKB"/>
</dbReference>
<dbReference type="GO" id="GO:0042169">
    <property type="term" value="F:SH2 domain binding"/>
    <property type="evidence" value="ECO:0000250"/>
    <property type="project" value="UniProtKB"/>
</dbReference>
<dbReference type="GO" id="GO:0006882">
    <property type="term" value="P:intracellular zinc ion homeostasis"/>
    <property type="evidence" value="ECO:0000250"/>
    <property type="project" value="UniProtKB"/>
</dbReference>
<dbReference type="GO" id="GO:2001244">
    <property type="term" value="P:positive regulation of intrinsic apoptotic signaling pathway"/>
    <property type="evidence" value="ECO:0000250"/>
    <property type="project" value="UniProtKB"/>
</dbReference>
<dbReference type="GO" id="GO:0050870">
    <property type="term" value="P:positive regulation of T cell activation"/>
    <property type="evidence" value="ECO:0000250"/>
    <property type="project" value="UniProtKB"/>
</dbReference>
<dbReference type="GO" id="GO:0009410">
    <property type="term" value="P:response to xenobiotic stimulus"/>
    <property type="evidence" value="ECO:0000250"/>
    <property type="project" value="UniProtKB"/>
</dbReference>
<dbReference type="GO" id="GO:0030217">
    <property type="term" value="P:T cell differentiation"/>
    <property type="evidence" value="ECO:0000250"/>
    <property type="project" value="UniProtKB"/>
</dbReference>
<dbReference type="CDD" id="cd05067">
    <property type="entry name" value="PTKc_Lck_Blk"/>
    <property type="match status" value="1"/>
</dbReference>
<dbReference type="CDD" id="cd10362">
    <property type="entry name" value="SH2_Src_Lck"/>
    <property type="match status" value="1"/>
</dbReference>
<dbReference type="CDD" id="cd12005">
    <property type="entry name" value="SH3_Lck"/>
    <property type="match status" value="1"/>
</dbReference>
<dbReference type="FunFam" id="1.10.510.10:FF:000553">
    <property type="entry name" value="Tyrosine-protein kinase"/>
    <property type="match status" value="1"/>
</dbReference>
<dbReference type="FunFam" id="2.30.30.40:FF:000152">
    <property type="entry name" value="Tyrosine-protein kinase"/>
    <property type="match status" value="1"/>
</dbReference>
<dbReference type="FunFam" id="3.30.200.20:FF:000036">
    <property type="entry name" value="Tyrosine-protein kinase"/>
    <property type="match status" value="1"/>
</dbReference>
<dbReference type="FunFam" id="3.30.505.10:FF:000077">
    <property type="entry name" value="Tyrosine-protein kinase Lck"/>
    <property type="match status" value="1"/>
</dbReference>
<dbReference type="Gene3D" id="3.30.200.20">
    <property type="entry name" value="Phosphorylase Kinase, domain 1"/>
    <property type="match status" value="1"/>
</dbReference>
<dbReference type="Gene3D" id="3.30.505.10">
    <property type="entry name" value="SH2 domain"/>
    <property type="match status" value="1"/>
</dbReference>
<dbReference type="Gene3D" id="2.30.30.40">
    <property type="entry name" value="SH3 Domains"/>
    <property type="match status" value="1"/>
</dbReference>
<dbReference type="Gene3D" id="1.10.510.10">
    <property type="entry name" value="Transferase(Phosphotransferase) domain 1"/>
    <property type="match status" value="1"/>
</dbReference>
<dbReference type="InterPro" id="IPR011009">
    <property type="entry name" value="Kinase-like_dom_sf"/>
</dbReference>
<dbReference type="InterPro" id="IPR035850">
    <property type="entry name" value="Lck_SH2"/>
</dbReference>
<dbReference type="InterPro" id="IPR035749">
    <property type="entry name" value="Lck_SH3"/>
</dbReference>
<dbReference type="InterPro" id="IPR050198">
    <property type="entry name" value="Non-receptor_tyrosine_kinases"/>
</dbReference>
<dbReference type="InterPro" id="IPR000719">
    <property type="entry name" value="Prot_kinase_dom"/>
</dbReference>
<dbReference type="InterPro" id="IPR017441">
    <property type="entry name" value="Protein_kinase_ATP_BS"/>
</dbReference>
<dbReference type="InterPro" id="IPR001245">
    <property type="entry name" value="Ser-Thr/Tyr_kinase_cat_dom"/>
</dbReference>
<dbReference type="InterPro" id="IPR000980">
    <property type="entry name" value="SH2"/>
</dbReference>
<dbReference type="InterPro" id="IPR036860">
    <property type="entry name" value="SH2_dom_sf"/>
</dbReference>
<dbReference type="InterPro" id="IPR036028">
    <property type="entry name" value="SH3-like_dom_sf"/>
</dbReference>
<dbReference type="InterPro" id="IPR001452">
    <property type="entry name" value="SH3_domain"/>
</dbReference>
<dbReference type="InterPro" id="IPR008266">
    <property type="entry name" value="Tyr_kinase_AS"/>
</dbReference>
<dbReference type="InterPro" id="IPR020635">
    <property type="entry name" value="Tyr_kinase_cat_dom"/>
</dbReference>
<dbReference type="PANTHER" id="PTHR24418">
    <property type="entry name" value="TYROSINE-PROTEIN KINASE"/>
    <property type="match status" value="1"/>
</dbReference>
<dbReference type="Pfam" id="PF07714">
    <property type="entry name" value="PK_Tyr_Ser-Thr"/>
    <property type="match status" value="1"/>
</dbReference>
<dbReference type="Pfam" id="PF00017">
    <property type="entry name" value="SH2"/>
    <property type="match status" value="1"/>
</dbReference>
<dbReference type="Pfam" id="PF00018">
    <property type="entry name" value="SH3_1"/>
    <property type="match status" value="1"/>
</dbReference>
<dbReference type="PRINTS" id="PR00401">
    <property type="entry name" value="SH2DOMAIN"/>
</dbReference>
<dbReference type="PRINTS" id="PR00452">
    <property type="entry name" value="SH3DOMAIN"/>
</dbReference>
<dbReference type="PRINTS" id="PR00109">
    <property type="entry name" value="TYRKINASE"/>
</dbReference>
<dbReference type="SMART" id="SM00252">
    <property type="entry name" value="SH2"/>
    <property type="match status" value="1"/>
</dbReference>
<dbReference type="SMART" id="SM00326">
    <property type="entry name" value="SH3"/>
    <property type="match status" value="1"/>
</dbReference>
<dbReference type="SMART" id="SM00219">
    <property type="entry name" value="TyrKc"/>
    <property type="match status" value="1"/>
</dbReference>
<dbReference type="SUPFAM" id="SSF56112">
    <property type="entry name" value="Protein kinase-like (PK-like)"/>
    <property type="match status" value="1"/>
</dbReference>
<dbReference type="SUPFAM" id="SSF55550">
    <property type="entry name" value="SH2 domain"/>
    <property type="match status" value="1"/>
</dbReference>
<dbReference type="SUPFAM" id="SSF50044">
    <property type="entry name" value="SH3-domain"/>
    <property type="match status" value="1"/>
</dbReference>
<dbReference type="PROSITE" id="PS00107">
    <property type="entry name" value="PROTEIN_KINASE_ATP"/>
    <property type="match status" value="1"/>
</dbReference>
<dbReference type="PROSITE" id="PS50011">
    <property type="entry name" value="PROTEIN_KINASE_DOM"/>
    <property type="match status" value="1"/>
</dbReference>
<dbReference type="PROSITE" id="PS00109">
    <property type="entry name" value="PROTEIN_KINASE_TYR"/>
    <property type="match status" value="1"/>
</dbReference>
<dbReference type="PROSITE" id="PS50001">
    <property type="entry name" value="SH2"/>
    <property type="match status" value="1"/>
</dbReference>
<dbReference type="PROSITE" id="PS50002">
    <property type="entry name" value="SH3"/>
    <property type="match status" value="1"/>
</dbReference>
<organism>
    <name type="scientific">Aotus nancymaae</name>
    <name type="common">Ma's night monkey</name>
    <dbReference type="NCBI Taxonomy" id="37293"/>
    <lineage>
        <taxon>Eukaryota</taxon>
        <taxon>Metazoa</taxon>
        <taxon>Chordata</taxon>
        <taxon>Craniata</taxon>
        <taxon>Vertebrata</taxon>
        <taxon>Euteleostomi</taxon>
        <taxon>Mammalia</taxon>
        <taxon>Eutheria</taxon>
        <taxon>Euarchontoglires</taxon>
        <taxon>Primates</taxon>
        <taxon>Haplorrhini</taxon>
        <taxon>Platyrrhini</taxon>
        <taxon>Aotidae</taxon>
        <taxon>Aotus</taxon>
    </lineage>
</organism>